<feature type="chain" id="PRO_0000275621" description="Photosystem I assembly protein Ycf3">
    <location>
        <begin position="1"/>
        <end position="168"/>
    </location>
</feature>
<feature type="repeat" description="TPR 1">
    <location>
        <begin position="35"/>
        <end position="68"/>
    </location>
</feature>
<feature type="repeat" description="TPR 2">
    <location>
        <begin position="72"/>
        <end position="105"/>
    </location>
</feature>
<feature type="repeat" description="TPR 3">
    <location>
        <begin position="120"/>
        <end position="153"/>
    </location>
</feature>
<proteinExistence type="inferred from homology"/>
<dbReference type="EMBL" id="DQ383815">
    <property type="protein sequence ID" value="ABD47147.1"/>
    <property type="molecule type" value="Genomic_DNA"/>
</dbReference>
<dbReference type="RefSeq" id="YP_588118.1">
    <property type="nucleotide sequence ID" value="NC_007977.1"/>
</dbReference>
<dbReference type="SMR" id="Q1KXV8"/>
<dbReference type="GeneID" id="4055593"/>
<dbReference type="KEGG" id="han:4055593"/>
<dbReference type="OrthoDB" id="431027at2759"/>
<dbReference type="GO" id="GO:0009535">
    <property type="term" value="C:chloroplast thylakoid membrane"/>
    <property type="evidence" value="ECO:0007669"/>
    <property type="project" value="UniProtKB-SubCell"/>
</dbReference>
<dbReference type="GO" id="GO:0015979">
    <property type="term" value="P:photosynthesis"/>
    <property type="evidence" value="ECO:0007669"/>
    <property type="project" value="UniProtKB-UniRule"/>
</dbReference>
<dbReference type="FunFam" id="1.25.40.10:FF:000004">
    <property type="entry name" value="Photosystem I assembly protein Ycf3"/>
    <property type="match status" value="1"/>
</dbReference>
<dbReference type="Gene3D" id="1.25.40.10">
    <property type="entry name" value="Tetratricopeptide repeat domain"/>
    <property type="match status" value="1"/>
</dbReference>
<dbReference type="HAMAP" id="MF_00439">
    <property type="entry name" value="Ycf3"/>
    <property type="match status" value="1"/>
</dbReference>
<dbReference type="InterPro" id="IPR022818">
    <property type="entry name" value="PSI_Ycf3_assembly"/>
</dbReference>
<dbReference type="InterPro" id="IPR011990">
    <property type="entry name" value="TPR-like_helical_dom_sf"/>
</dbReference>
<dbReference type="InterPro" id="IPR019734">
    <property type="entry name" value="TPR_rpt"/>
</dbReference>
<dbReference type="InterPro" id="IPR051685">
    <property type="entry name" value="Ycf3/AcsC/BcsC/TPR_MFPF"/>
</dbReference>
<dbReference type="NCBIfam" id="NF002725">
    <property type="entry name" value="PRK02603.1"/>
    <property type="match status" value="1"/>
</dbReference>
<dbReference type="PANTHER" id="PTHR44943">
    <property type="entry name" value="CELLULOSE SYNTHASE OPERON PROTEIN C"/>
    <property type="match status" value="1"/>
</dbReference>
<dbReference type="PANTHER" id="PTHR44943:SF8">
    <property type="entry name" value="TPR REPEAT-CONTAINING PROTEIN MJ0263"/>
    <property type="match status" value="1"/>
</dbReference>
<dbReference type="Pfam" id="PF00515">
    <property type="entry name" value="TPR_1"/>
    <property type="match status" value="1"/>
</dbReference>
<dbReference type="SMART" id="SM00028">
    <property type="entry name" value="TPR"/>
    <property type="match status" value="3"/>
</dbReference>
<dbReference type="SUPFAM" id="SSF48452">
    <property type="entry name" value="TPR-like"/>
    <property type="match status" value="1"/>
</dbReference>
<dbReference type="PROSITE" id="PS50005">
    <property type="entry name" value="TPR"/>
    <property type="match status" value="3"/>
</dbReference>
<dbReference type="PROSITE" id="PS50293">
    <property type="entry name" value="TPR_REGION"/>
    <property type="match status" value="2"/>
</dbReference>
<organism>
    <name type="scientific">Helianthus annuus</name>
    <name type="common">Common sunflower</name>
    <dbReference type="NCBI Taxonomy" id="4232"/>
    <lineage>
        <taxon>Eukaryota</taxon>
        <taxon>Viridiplantae</taxon>
        <taxon>Streptophyta</taxon>
        <taxon>Embryophyta</taxon>
        <taxon>Tracheophyta</taxon>
        <taxon>Spermatophyta</taxon>
        <taxon>Magnoliopsida</taxon>
        <taxon>eudicotyledons</taxon>
        <taxon>Gunneridae</taxon>
        <taxon>Pentapetalae</taxon>
        <taxon>asterids</taxon>
        <taxon>campanulids</taxon>
        <taxon>Asterales</taxon>
        <taxon>Asteraceae</taxon>
        <taxon>Asteroideae</taxon>
        <taxon>Heliantheae alliance</taxon>
        <taxon>Heliantheae</taxon>
        <taxon>Helianthus</taxon>
    </lineage>
</organism>
<evidence type="ECO:0000255" key="1">
    <source>
        <dbReference type="HAMAP-Rule" id="MF_00439"/>
    </source>
</evidence>
<gene>
    <name evidence="1" type="primary">ycf3</name>
</gene>
<reference key="1">
    <citation type="submission" date="2006-01" db="EMBL/GenBank/DDBJ databases">
        <title>A comparison of the first two published chloroplast genomes in Asteraceae: Lactuca and Helianthus.</title>
        <authorList>
            <person name="Timme R.E."/>
            <person name="Kuehl J.V."/>
            <person name="Boore J.L."/>
            <person name="Jansen R.K."/>
        </authorList>
    </citation>
    <scope>NUCLEOTIDE SEQUENCE [LARGE SCALE GENOMIC DNA]</scope>
    <source>
        <strain>cv. HA383</strain>
    </source>
</reference>
<sequence length="168" mass="19585">MSRSRINGNFIDKTFSIVANILLRIIPTTSGEKEAFTYYRDGMSAQSEGNYAEALQNYYEAMRLEIDPYDRSYILYNIGLIHTSNGEHTKALEYYFRALERNPFLPQAFNNMAVICHYRGEQAIRQGDSEIAEAWFDQAAEYWKQAIALTPGNYIEAHNWLKITRRFE</sequence>
<name>YCF3_HELAN</name>
<protein>
    <recommendedName>
        <fullName evidence="1">Photosystem I assembly protein Ycf3</fullName>
    </recommendedName>
</protein>
<keyword id="KW-0150">Chloroplast</keyword>
<keyword id="KW-0472">Membrane</keyword>
<keyword id="KW-0602">Photosynthesis</keyword>
<keyword id="KW-0934">Plastid</keyword>
<keyword id="KW-0677">Repeat</keyword>
<keyword id="KW-0793">Thylakoid</keyword>
<keyword id="KW-0802">TPR repeat</keyword>
<comment type="function">
    <text evidence="1">Essential for the assembly of the photosystem I (PSI) complex. May act as a chaperone-like factor to guide the assembly of the PSI subunits.</text>
</comment>
<comment type="subcellular location">
    <subcellularLocation>
        <location evidence="1">Plastid</location>
        <location evidence="1">Chloroplast thylakoid membrane</location>
        <topology evidence="1">Peripheral membrane protein</topology>
    </subcellularLocation>
</comment>
<comment type="similarity">
    <text evidence="1">Belongs to the Ycf3 family.</text>
</comment>
<accession>Q1KXV8</accession>
<geneLocation type="chloroplast"/>